<sequence>MIPVLPPLEALLDRLYVVALPMRVRFRGITTREVALIEGPAGWGEFGAFVEYQSAQACAWLASAIETAYCAPPPVRRDRVPINATVPAVAAAQVGEVLARFPGARTAKVKVAEPGQSLADDIERVNAVRELVPMVRVDANGGWGVAEAVAAAAALTADGPLEYLEQPCATVAELAELRRRVDVPIAADESIRKAEDPLAVVRAQAADIAVLKVAPLGGISALLDIAARIAVPVVVSSALDSAVGIAAGLTAAAALPELDHACGLGTGGLFEEDVAEPAAPVDGFLAVARTTPDPARLQALGAPPQRRQWWIDRVKACYSLLVPSFG</sequence>
<keyword id="KW-0456">Lyase</keyword>
<keyword id="KW-0460">Magnesium</keyword>
<keyword id="KW-0474">Menaquinone biosynthesis</keyword>
<keyword id="KW-0479">Metal-binding</keyword>
<keyword id="KW-1185">Reference proteome</keyword>
<dbReference type="EC" id="4.2.1.113" evidence="1"/>
<dbReference type="EMBL" id="AL123456">
    <property type="protein sequence ID" value="CCP43291.1"/>
    <property type="molecule type" value="Genomic_DNA"/>
</dbReference>
<dbReference type="PIR" id="D70548">
    <property type="entry name" value="D70548"/>
</dbReference>
<dbReference type="RefSeq" id="NP_215067.1">
    <property type="nucleotide sequence ID" value="NC_000962.3"/>
</dbReference>
<dbReference type="RefSeq" id="WP_003402923.1">
    <property type="nucleotide sequence ID" value="NZ_NVQJ01000036.1"/>
</dbReference>
<dbReference type="SMR" id="P9WJP3"/>
<dbReference type="FunCoup" id="P9WJP3">
    <property type="interactions" value="134"/>
</dbReference>
<dbReference type="STRING" id="83332.Rv0553"/>
<dbReference type="PaxDb" id="83332-Rv0553"/>
<dbReference type="DNASU" id="887544"/>
<dbReference type="GeneID" id="887544"/>
<dbReference type="KEGG" id="mtu:Rv0553"/>
<dbReference type="KEGG" id="mtv:RVBD_0553"/>
<dbReference type="TubercuList" id="Rv0553"/>
<dbReference type="eggNOG" id="COG4948">
    <property type="taxonomic scope" value="Bacteria"/>
</dbReference>
<dbReference type="InParanoid" id="P9WJP3"/>
<dbReference type="OrthoDB" id="3725747at2"/>
<dbReference type="PhylomeDB" id="P9WJP3"/>
<dbReference type="BRENDA" id="4.2.1.113">
    <property type="organism ID" value="3445"/>
</dbReference>
<dbReference type="UniPathway" id="UPA00079"/>
<dbReference type="UniPathway" id="UPA01057">
    <property type="reaction ID" value="UER00165"/>
</dbReference>
<dbReference type="Proteomes" id="UP000001584">
    <property type="component" value="Chromosome"/>
</dbReference>
<dbReference type="GO" id="GO:0000287">
    <property type="term" value="F:magnesium ion binding"/>
    <property type="evidence" value="ECO:0007669"/>
    <property type="project" value="UniProtKB-UniRule"/>
</dbReference>
<dbReference type="GO" id="GO:0043748">
    <property type="term" value="F:O-succinylbenzoate synthase activity"/>
    <property type="evidence" value="ECO:0007669"/>
    <property type="project" value="UniProtKB-EC"/>
</dbReference>
<dbReference type="GO" id="GO:0016854">
    <property type="term" value="F:racemase and epimerase activity"/>
    <property type="evidence" value="ECO:0000318"/>
    <property type="project" value="GO_Central"/>
</dbReference>
<dbReference type="GO" id="GO:0009234">
    <property type="term" value="P:menaquinone biosynthetic process"/>
    <property type="evidence" value="ECO:0007669"/>
    <property type="project" value="UniProtKB-UniRule"/>
</dbReference>
<dbReference type="GO" id="GO:0006518">
    <property type="term" value="P:peptide metabolic process"/>
    <property type="evidence" value="ECO:0000318"/>
    <property type="project" value="GO_Central"/>
</dbReference>
<dbReference type="CDD" id="cd03320">
    <property type="entry name" value="OSBS"/>
    <property type="match status" value="1"/>
</dbReference>
<dbReference type="Gene3D" id="3.20.20.120">
    <property type="entry name" value="Enolase-like C-terminal domain"/>
    <property type="match status" value="1"/>
</dbReference>
<dbReference type="HAMAP" id="MF_00470">
    <property type="entry name" value="MenC_1"/>
    <property type="match status" value="1"/>
</dbReference>
<dbReference type="InterPro" id="IPR036849">
    <property type="entry name" value="Enolase-like_C_sf"/>
</dbReference>
<dbReference type="InterPro" id="IPR029065">
    <property type="entry name" value="Enolase_C-like"/>
</dbReference>
<dbReference type="InterPro" id="IPR013342">
    <property type="entry name" value="Mandelate_racemase_C"/>
</dbReference>
<dbReference type="InterPro" id="IPR010196">
    <property type="entry name" value="OSB_synthase_MenC1"/>
</dbReference>
<dbReference type="NCBIfam" id="NF002782">
    <property type="entry name" value="PRK02901.1"/>
    <property type="match status" value="1"/>
</dbReference>
<dbReference type="PANTHER" id="PTHR48073:SF2">
    <property type="entry name" value="O-SUCCINYLBENZOATE SYNTHASE"/>
    <property type="match status" value="1"/>
</dbReference>
<dbReference type="PANTHER" id="PTHR48073">
    <property type="entry name" value="O-SUCCINYLBENZOATE SYNTHASE-RELATED"/>
    <property type="match status" value="1"/>
</dbReference>
<dbReference type="Pfam" id="PF18374">
    <property type="entry name" value="Enolase_like_N"/>
    <property type="match status" value="1"/>
</dbReference>
<dbReference type="Pfam" id="PF13378">
    <property type="entry name" value="MR_MLE_C"/>
    <property type="match status" value="1"/>
</dbReference>
<dbReference type="SFLD" id="SFLDG00180">
    <property type="entry name" value="muconate_cycloisomerase"/>
    <property type="match status" value="1"/>
</dbReference>
<dbReference type="SFLD" id="SFLDF00009">
    <property type="entry name" value="o-succinylbenzoate_synthase"/>
    <property type="match status" value="1"/>
</dbReference>
<dbReference type="SMART" id="SM00922">
    <property type="entry name" value="MR_MLE"/>
    <property type="match status" value="1"/>
</dbReference>
<dbReference type="SUPFAM" id="SSF51604">
    <property type="entry name" value="Enolase C-terminal domain-like"/>
    <property type="match status" value="1"/>
</dbReference>
<evidence type="ECO:0000255" key="1">
    <source>
        <dbReference type="HAMAP-Rule" id="MF_00470"/>
    </source>
</evidence>
<reference key="1">
    <citation type="journal article" date="1998" name="Nature">
        <title>Deciphering the biology of Mycobacterium tuberculosis from the complete genome sequence.</title>
        <authorList>
            <person name="Cole S.T."/>
            <person name="Brosch R."/>
            <person name="Parkhill J."/>
            <person name="Garnier T."/>
            <person name="Churcher C.M."/>
            <person name="Harris D.E."/>
            <person name="Gordon S.V."/>
            <person name="Eiglmeier K."/>
            <person name="Gas S."/>
            <person name="Barry C.E. III"/>
            <person name="Tekaia F."/>
            <person name="Badcock K."/>
            <person name="Basham D."/>
            <person name="Brown D."/>
            <person name="Chillingworth T."/>
            <person name="Connor R."/>
            <person name="Davies R.M."/>
            <person name="Devlin K."/>
            <person name="Feltwell T."/>
            <person name="Gentles S."/>
            <person name="Hamlin N."/>
            <person name="Holroyd S."/>
            <person name="Hornsby T."/>
            <person name="Jagels K."/>
            <person name="Krogh A."/>
            <person name="McLean J."/>
            <person name="Moule S."/>
            <person name="Murphy L.D."/>
            <person name="Oliver S."/>
            <person name="Osborne J."/>
            <person name="Quail M.A."/>
            <person name="Rajandream M.A."/>
            <person name="Rogers J."/>
            <person name="Rutter S."/>
            <person name="Seeger K."/>
            <person name="Skelton S."/>
            <person name="Squares S."/>
            <person name="Squares R."/>
            <person name="Sulston J.E."/>
            <person name="Taylor K."/>
            <person name="Whitehead S."/>
            <person name="Barrell B.G."/>
        </authorList>
    </citation>
    <scope>NUCLEOTIDE SEQUENCE [LARGE SCALE GENOMIC DNA]</scope>
    <source>
        <strain>ATCC 25618 / H37Rv</strain>
    </source>
</reference>
<reference key="2">
    <citation type="journal article" date="2008" name="BMC Syst. Biol.">
        <title>targetTB: a target identification pipeline for Mycobacterium tuberculosis through an interactome, reactome and genome-scale structural analysis.</title>
        <authorList>
            <person name="Raman K."/>
            <person name="Yeturu K."/>
            <person name="Chandra N."/>
        </authorList>
    </citation>
    <scope>IDENTIFICATION AS A DRUG TARGET [LARGE SCALE ANALYSIS]</scope>
</reference>
<reference key="3">
    <citation type="journal article" date="2011" name="Mol. Cell. Proteomics">
        <title>Proteogenomic analysis of Mycobacterium tuberculosis by high resolution mass spectrometry.</title>
        <authorList>
            <person name="Kelkar D.S."/>
            <person name="Kumar D."/>
            <person name="Kumar P."/>
            <person name="Balakrishnan L."/>
            <person name="Muthusamy B."/>
            <person name="Yadav A.K."/>
            <person name="Shrivastava P."/>
            <person name="Marimuthu A."/>
            <person name="Anand S."/>
            <person name="Sundaram H."/>
            <person name="Kingsbury R."/>
            <person name="Harsha H.C."/>
            <person name="Nair B."/>
            <person name="Prasad T.S."/>
            <person name="Chauhan D.S."/>
            <person name="Katoch K."/>
            <person name="Katoch V.M."/>
            <person name="Kumar P."/>
            <person name="Chaerkady R."/>
            <person name="Ramachandran S."/>
            <person name="Dash D."/>
            <person name="Pandey A."/>
        </authorList>
    </citation>
    <scope>IDENTIFICATION BY MASS SPECTROMETRY [LARGE SCALE ANALYSIS]</scope>
    <source>
        <strain>ATCC 25618 / H37Rv</strain>
    </source>
</reference>
<gene>
    <name evidence="1" type="primary">menC</name>
    <name type="ordered locus">Rv0553</name>
    <name type="ORF">MTCY25D10.32</name>
</gene>
<feature type="chain" id="PRO_0000171279" description="o-succinylbenzoate synthase">
    <location>
        <begin position="1"/>
        <end position="326"/>
    </location>
</feature>
<feature type="active site" description="Proton donor" evidence="1">
    <location>
        <position position="110"/>
    </location>
</feature>
<feature type="active site" description="Proton acceptor" evidence="1">
    <location>
        <position position="212"/>
    </location>
</feature>
<feature type="binding site" evidence="1">
    <location>
        <position position="138"/>
    </location>
    <ligand>
        <name>Mg(2+)</name>
        <dbReference type="ChEBI" id="CHEBI:18420"/>
    </ligand>
</feature>
<feature type="binding site" evidence="1">
    <location>
        <position position="165"/>
    </location>
    <ligand>
        <name>Mg(2+)</name>
        <dbReference type="ChEBI" id="CHEBI:18420"/>
    </ligand>
</feature>
<feature type="binding site" evidence="1">
    <location>
        <position position="188"/>
    </location>
    <ligand>
        <name>Mg(2+)</name>
        <dbReference type="ChEBI" id="CHEBI:18420"/>
    </ligand>
</feature>
<accession>P9WJP3</accession>
<accession>L0T446</accession>
<accession>O06419</accession>
<accession>P65425</accession>
<proteinExistence type="evidence at protein level"/>
<comment type="function">
    <text evidence="1">Converts 2-succinyl-6-hydroxy-2,4-cyclohexadiene-1-carboxylate (SHCHC) to 2-succinylbenzoate (OSB).</text>
</comment>
<comment type="catalytic activity">
    <reaction evidence="1">
        <text>(1R,6R)-6-hydroxy-2-succinyl-cyclohexa-2,4-diene-1-carboxylate = 2-succinylbenzoate + H2O</text>
        <dbReference type="Rhea" id="RHEA:10196"/>
        <dbReference type="ChEBI" id="CHEBI:15377"/>
        <dbReference type="ChEBI" id="CHEBI:18325"/>
        <dbReference type="ChEBI" id="CHEBI:58689"/>
        <dbReference type="EC" id="4.2.1.113"/>
    </reaction>
</comment>
<comment type="cofactor">
    <cofactor evidence="1">
        <name>a divalent metal cation</name>
        <dbReference type="ChEBI" id="CHEBI:60240"/>
    </cofactor>
</comment>
<comment type="pathway">
    <text evidence="1">Quinol/quinone metabolism; 1,4-dihydroxy-2-naphthoate biosynthesis; 1,4-dihydroxy-2-naphthoate from chorismate: step 4/7.</text>
</comment>
<comment type="pathway">
    <text evidence="1">Quinol/quinone metabolism; menaquinone biosynthesis.</text>
</comment>
<comment type="miscellaneous">
    <text>Was identified as a high-confidence drug target.</text>
</comment>
<comment type="similarity">
    <text evidence="1">Belongs to the mandelate racemase/muconate lactonizing enzyme family. MenC type 1 subfamily.</text>
</comment>
<protein>
    <recommendedName>
        <fullName evidence="1">o-succinylbenzoate synthase</fullName>
        <shortName evidence="1">OSB synthase</shortName>
        <shortName evidence="1">OSBS</shortName>
        <ecNumber evidence="1">4.2.1.113</ecNumber>
    </recommendedName>
    <alternativeName>
        <fullName evidence="1">4-(2'-carboxyphenyl)-4-oxybutyric acid synthase</fullName>
    </alternativeName>
    <alternativeName>
        <fullName evidence="1">o-succinylbenzoic acid synthase</fullName>
    </alternativeName>
</protein>
<name>MENC_MYCTU</name>
<organism>
    <name type="scientific">Mycobacterium tuberculosis (strain ATCC 25618 / H37Rv)</name>
    <dbReference type="NCBI Taxonomy" id="83332"/>
    <lineage>
        <taxon>Bacteria</taxon>
        <taxon>Bacillati</taxon>
        <taxon>Actinomycetota</taxon>
        <taxon>Actinomycetes</taxon>
        <taxon>Mycobacteriales</taxon>
        <taxon>Mycobacteriaceae</taxon>
        <taxon>Mycobacterium</taxon>
        <taxon>Mycobacterium tuberculosis complex</taxon>
    </lineage>
</organism>